<keyword id="KW-0430">Lectin</keyword>
<keyword id="KW-1185">Reference proteome</keyword>
<sequence>MINEILDNKMSDIRSSGKNVKLESTTMTSVKDLPSWCFIKSRAMLKGDNKPFVVSVLNSSTETPSKGWKCVLFQTNINDKGQLWQLVDGHLLSQLYGSFVLDIDSDNNNGTDLIINSQIPSNNERQTWKLGSNGEIMNNQTKMFIGVKGSNSAPIDPSNNAQLVCESTTSVDNVCFQWDLEPSFPLNSILTQTTEPFPNYTDEKLKAYIYISNNLIKGIDDIRSQYTNSNYSFNSFSNELVNMKYPDSISKDSFDEIKTQLQSEFEQVDSIINLFNNYQQFHIGLFADNSARLNQIVSIIQFDDKTTSVAGSILSIISNILKLVLTFLPQPAGNFGNVMMGAISVSSAASTPNKVNVDPFKVELSKLWDSLSSNFEAILFNMGTMESMILKDWGKMKAVYQLLSTSLAWTPTMTSQLISTGATAYGISLLQMLLPEKYQIYCWNQNFDAKYGFAPGYPAPIPSDIPEYCTWTDENGDVLFIASTSDLRVHPIKEVMDMVWKDNVVVKKDFYRSRNGWSFPTSLVNRITRWLIPNVTNNTSIPMKYTIGDFKGDSKTTYQLDLPTFSTSYPLDVSHNNNGHNYHFTITITNALDNSKIASLVIIVSAVGGSFSKGQLGDHSVTKGYLIGDPIFNTSVRDSTSTCNIIVNIDYNDTN</sequence>
<comment type="similarity">
    <text evidence="2">Belongs to the cup family.</text>
</comment>
<protein>
    <recommendedName>
        <fullName>Putative calcium up-regulated protein J</fullName>
    </recommendedName>
</protein>
<name>CUPJ_DICDI</name>
<accession>Q54Z20</accession>
<dbReference type="EMBL" id="AAFI02000023">
    <property type="protein sequence ID" value="EAL68152.1"/>
    <property type="molecule type" value="Genomic_DNA"/>
</dbReference>
<dbReference type="RefSeq" id="XP_642032.1">
    <property type="nucleotide sequence ID" value="XM_636940.1"/>
</dbReference>
<dbReference type="PaxDb" id="44689-DDB0266362"/>
<dbReference type="EnsemblProtists" id="EAL68152">
    <property type="protein sequence ID" value="EAL68152"/>
    <property type="gene ID" value="DDB_G0277959"/>
</dbReference>
<dbReference type="GeneID" id="8621243"/>
<dbReference type="KEGG" id="ddi:DDB_G0277959"/>
<dbReference type="dictyBase" id="DDB_G0277959">
    <property type="gene designation" value="cupJ"/>
</dbReference>
<dbReference type="VEuPathDB" id="AmoebaDB:DDB_G0277959"/>
<dbReference type="eggNOG" id="ENOG502R8B0">
    <property type="taxonomic scope" value="Eukaryota"/>
</dbReference>
<dbReference type="HOGENOM" id="CLU_418846_0_0_1"/>
<dbReference type="InParanoid" id="Q54Z20"/>
<dbReference type="OMA" id="YVWISEQ"/>
<dbReference type="PhylomeDB" id="Q54Z20"/>
<dbReference type="PRO" id="PR:Q54Z20"/>
<dbReference type="Proteomes" id="UP000002195">
    <property type="component" value="Chromosome 3"/>
</dbReference>
<dbReference type="GO" id="GO:0030246">
    <property type="term" value="F:carbohydrate binding"/>
    <property type="evidence" value="ECO:0007669"/>
    <property type="project" value="UniProtKB-KW"/>
</dbReference>
<dbReference type="Gene3D" id="2.80.10.50">
    <property type="match status" value="1"/>
</dbReference>
<dbReference type="InterPro" id="IPR051780">
    <property type="entry name" value="Ca_Up-reg_Membrane_Reg"/>
</dbReference>
<dbReference type="InterPro" id="IPR035992">
    <property type="entry name" value="Ricin_B-like_lectins"/>
</dbReference>
<dbReference type="PANTHER" id="PTHR31599">
    <property type="entry name" value="CALCIUM UP-REGULATED PROTEIN A-RELATED"/>
    <property type="match status" value="1"/>
</dbReference>
<dbReference type="PANTHER" id="PTHR31599:SF3">
    <property type="entry name" value="CALCIUM UP-REGULATED PROTEIN I-RELATED"/>
    <property type="match status" value="1"/>
</dbReference>
<dbReference type="SUPFAM" id="SSF50370">
    <property type="entry name" value="Ricin B-like lectins"/>
    <property type="match status" value="1"/>
</dbReference>
<dbReference type="PROSITE" id="PS50231">
    <property type="entry name" value="RICIN_B_LECTIN"/>
    <property type="match status" value="1"/>
</dbReference>
<evidence type="ECO:0000255" key="1">
    <source>
        <dbReference type="PROSITE-ProRule" id="PRU00174"/>
    </source>
</evidence>
<evidence type="ECO:0000305" key="2"/>
<gene>
    <name type="primary">cupJ</name>
    <name type="ORF">DDB_G0277959</name>
</gene>
<organism>
    <name type="scientific">Dictyostelium discoideum</name>
    <name type="common">Social amoeba</name>
    <dbReference type="NCBI Taxonomy" id="44689"/>
    <lineage>
        <taxon>Eukaryota</taxon>
        <taxon>Amoebozoa</taxon>
        <taxon>Evosea</taxon>
        <taxon>Eumycetozoa</taxon>
        <taxon>Dictyostelia</taxon>
        <taxon>Dictyosteliales</taxon>
        <taxon>Dictyosteliaceae</taxon>
        <taxon>Dictyostelium</taxon>
    </lineage>
</organism>
<proteinExistence type="inferred from homology"/>
<feature type="chain" id="PRO_0000328256" description="Putative calcium up-regulated protein J">
    <location>
        <begin position="1"/>
        <end position="655"/>
    </location>
</feature>
<feature type="domain" description="Ricin B-type lectin" evidence="1">
    <location>
        <begin position="40"/>
        <end position="181"/>
    </location>
</feature>
<reference key="1">
    <citation type="journal article" date="2005" name="Nature">
        <title>The genome of the social amoeba Dictyostelium discoideum.</title>
        <authorList>
            <person name="Eichinger L."/>
            <person name="Pachebat J.A."/>
            <person name="Gloeckner G."/>
            <person name="Rajandream M.A."/>
            <person name="Sucgang R."/>
            <person name="Berriman M."/>
            <person name="Song J."/>
            <person name="Olsen R."/>
            <person name="Szafranski K."/>
            <person name="Xu Q."/>
            <person name="Tunggal B."/>
            <person name="Kummerfeld S."/>
            <person name="Madera M."/>
            <person name="Konfortov B.A."/>
            <person name="Rivero F."/>
            <person name="Bankier A.T."/>
            <person name="Lehmann R."/>
            <person name="Hamlin N."/>
            <person name="Davies R."/>
            <person name="Gaudet P."/>
            <person name="Fey P."/>
            <person name="Pilcher K."/>
            <person name="Chen G."/>
            <person name="Saunders D."/>
            <person name="Sodergren E.J."/>
            <person name="Davis P."/>
            <person name="Kerhornou A."/>
            <person name="Nie X."/>
            <person name="Hall N."/>
            <person name="Anjard C."/>
            <person name="Hemphill L."/>
            <person name="Bason N."/>
            <person name="Farbrother P."/>
            <person name="Desany B."/>
            <person name="Just E."/>
            <person name="Morio T."/>
            <person name="Rost R."/>
            <person name="Churcher C.M."/>
            <person name="Cooper J."/>
            <person name="Haydock S."/>
            <person name="van Driessche N."/>
            <person name="Cronin A."/>
            <person name="Goodhead I."/>
            <person name="Muzny D.M."/>
            <person name="Mourier T."/>
            <person name="Pain A."/>
            <person name="Lu M."/>
            <person name="Harper D."/>
            <person name="Lindsay R."/>
            <person name="Hauser H."/>
            <person name="James K.D."/>
            <person name="Quiles M."/>
            <person name="Madan Babu M."/>
            <person name="Saito T."/>
            <person name="Buchrieser C."/>
            <person name="Wardroper A."/>
            <person name="Felder M."/>
            <person name="Thangavelu M."/>
            <person name="Johnson D."/>
            <person name="Knights A."/>
            <person name="Loulseged H."/>
            <person name="Mungall K.L."/>
            <person name="Oliver K."/>
            <person name="Price C."/>
            <person name="Quail M.A."/>
            <person name="Urushihara H."/>
            <person name="Hernandez J."/>
            <person name="Rabbinowitsch E."/>
            <person name="Steffen D."/>
            <person name="Sanders M."/>
            <person name="Ma J."/>
            <person name="Kohara Y."/>
            <person name="Sharp S."/>
            <person name="Simmonds M.N."/>
            <person name="Spiegler S."/>
            <person name="Tivey A."/>
            <person name="Sugano S."/>
            <person name="White B."/>
            <person name="Walker D."/>
            <person name="Woodward J.R."/>
            <person name="Winckler T."/>
            <person name="Tanaka Y."/>
            <person name="Shaulsky G."/>
            <person name="Schleicher M."/>
            <person name="Weinstock G.M."/>
            <person name="Rosenthal A."/>
            <person name="Cox E.C."/>
            <person name="Chisholm R.L."/>
            <person name="Gibbs R.A."/>
            <person name="Loomis W.F."/>
            <person name="Platzer M."/>
            <person name="Kay R.R."/>
            <person name="Williams J.G."/>
            <person name="Dear P.H."/>
            <person name="Noegel A.A."/>
            <person name="Barrell B.G."/>
            <person name="Kuspa A."/>
        </authorList>
    </citation>
    <scope>NUCLEOTIDE SEQUENCE [LARGE SCALE GENOMIC DNA]</scope>
    <source>
        <strain>AX4</strain>
    </source>
</reference>